<name>PYRH_ERYLH</name>
<reference key="1">
    <citation type="journal article" date="2009" name="J. Bacteriol.">
        <title>Complete genome sequence of Erythrobacter litoralis HTCC2594.</title>
        <authorList>
            <person name="Oh H.M."/>
            <person name="Giovannoni S.J."/>
            <person name="Ferriera S."/>
            <person name="Johnson J."/>
            <person name="Cho J.C."/>
        </authorList>
    </citation>
    <scope>NUCLEOTIDE SEQUENCE [LARGE SCALE GENOMIC DNA]</scope>
    <source>
        <strain>HTCC2594</strain>
    </source>
</reference>
<organism>
    <name type="scientific">Erythrobacter litoralis (strain HTCC2594)</name>
    <dbReference type="NCBI Taxonomy" id="314225"/>
    <lineage>
        <taxon>Bacteria</taxon>
        <taxon>Pseudomonadati</taxon>
        <taxon>Pseudomonadota</taxon>
        <taxon>Alphaproteobacteria</taxon>
        <taxon>Sphingomonadales</taxon>
        <taxon>Erythrobacteraceae</taxon>
        <taxon>Erythrobacter/Porphyrobacter group</taxon>
        <taxon>Erythrobacter</taxon>
    </lineage>
</organism>
<evidence type="ECO:0000255" key="1">
    <source>
        <dbReference type="HAMAP-Rule" id="MF_01220"/>
    </source>
</evidence>
<proteinExistence type="inferred from homology"/>
<dbReference type="EC" id="2.7.4.22" evidence="1"/>
<dbReference type="EMBL" id="CP000157">
    <property type="protein sequence ID" value="ABC62849.1"/>
    <property type="molecule type" value="Genomic_DNA"/>
</dbReference>
<dbReference type="RefSeq" id="WP_011413725.1">
    <property type="nucleotide sequence ID" value="NC_007722.1"/>
</dbReference>
<dbReference type="SMR" id="Q2NBU2"/>
<dbReference type="STRING" id="314225.ELI_03785"/>
<dbReference type="KEGG" id="eli:ELI_03785"/>
<dbReference type="eggNOG" id="COG0528">
    <property type="taxonomic scope" value="Bacteria"/>
</dbReference>
<dbReference type="HOGENOM" id="CLU_033861_0_0_5"/>
<dbReference type="OrthoDB" id="9807458at2"/>
<dbReference type="UniPathway" id="UPA00159">
    <property type="reaction ID" value="UER00275"/>
</dbReference>
<dbReference type="Proteomes" id="UP000008808">
    <property type="component" value="Chromosome"/>
</dbReference>
<dbReference type="GO" id="GO:0005737">
    <property type="term" value="C:cytoplasm"/>
    <property type="evidence" value="ECO:0007669"/>
    <property type="project" value="UniProtKB-SubCell"/>
</dbReference>
<dbReference type="GO" id="GO:0005524">
    <property type="term" value="F:ATP binding"/>
    <property type="evidence" value="ECO:0007669"/>
    <property type="project" value="UniProtKB-KW"/>
</dbReference>
<dbReference type="GO" id="GO:0033862">
    <property type="term" value="F:UMP kinase activity"/>
    <property type="evidence" value="ECO:0007669"/>
    <property type="project" value="UniProtKB-EC"/>
</dbReference>
<dbReference type="GO" id="GO:0044210">
    <property type="term" value="P:'de novo' CTP biosynthetic process"/>
    <property type="evidence" value="ECO:0007669"/>
    <property type="project" value="UniProtKB-UniRule"/>
</dbReference>
<dbReference type="GO" id="GO:0006225">
    <property type="term" value="P:UDP biosynthetic process"/>
    <property type="evidence" value="ECO:0007669"/>
    <property type="project" value="TreeGrafter"/>
</dbReference>
<dbReference type="CDD" id="cd04254">
    <property type="entry name" value="AAK_UMPK-PyrH-Ec"/>
    <property type="match status" value="1"/>
</dbReference>
<dbReference type="FunFam" id="3.40.1160.10:FF:000001">
    <property type="entry name" value="Uridylate kinase"/>
    <property type="match status" value="1"/>
</dbReference>
<dbReference type="Gene3D" id="3.40.1160.10">
    <property type="entry name" value="Acetylglutamate kinase-like"/>
    <property type="match status" value="1"/>
</dbReference>
<dbReference type="HAMAP" id="MF_01220_B">
    <property type="entry name" value="PyrH_B"/>
    <property type="match status" value="1"/>
</dbReference>
<dbReference type="InterPro" id="IPR036393">
    <property type="entry name" value="AceGlu_kinase-like_sf"/>
</dbReference>
<dbReference type="InterPro" id="IPR001048">
    <property type="entry name" value="Asp/Glu/Uridylate_kinase"/>
</dbReference>
<dbReference type="InterPro" id="IPR011817">
    <property type="entry name" value="Uridylate_kinase"/>
</dbReference>
<dbReference type="InterPro" id="IPR015963">
    <property type="entry name" value="Uridylate_kinase_bac"/>
</dbReference>
<dbReference type="NCBIfam" id="TIGR02075">
    <property type="entry name" value="pyrH_bact"/>
    <property type="match status" value="1"/>
</dbReference>
<dbReference type="PANTHER" id="PTHR42833">
    <property type="entry name" value="URIDYLATE KINASE"/>
    <property type="match status" value="1"/>
</dbReference>
<dbReference type="PANTHER" id="PTHR42833:SF4">
    <property type="entry name" value="URIDYLATE KINASE PUMPKIN, CHLOROPLASTIC"/>
    <property type="match status" value="1"/>
</dbReference>
<dbReference type="Pfam" id="PF00696">
    <property type="entry name" value="AA_kinase"/>
    <property type="match status" value="1"/>
</dbReference>
<dbReference type="PIRSF" id="PIRSF005650">
    <property type="entry name" value="Uridylate_kin"/>
    <property type="match status" value="1"/>
</dbReference>
<dbReference type="SUPFAM" id="SSF53633">
    <property type="entry name" value="Carbamate kinase-like"/>
    <property type="match status" value="1"/>
</dbReference>
<sequence>MALPEMKRVLLKLSGEVLMGEQDYGIDPAFVMELAKEVKAAREQGLQICLVIGGGNIFRGMAGAAQGMERAQADYMGMLATVMNALAMQSALEQLGVHTRVQSAIQMDQVCEPVIRRRAERHLEKDRVVIFAAGVGAPYFTTDSGAALRAAEMNCDALLKGTSVDGVYDSDPKTNPDAKRYDTVGYGKVLADNLKVMDASAVALCRDNDIPIIVFSIREKGNLARVLAGEGVQTVVQN</sequence>
<accession>Q2NBU2</accession>
<keyword id="KW-0067">ATP-binding</keyword>
<keyword id="KW-0963">Cytoplasm</keyword>
<keyword id="KW-0418">Kinase</keyword>
<keyword id="KW-0547">Nucleotide-binding</keyword>
<keyword id="KW-0665">Pyrimidine biosynthesis</keyword>
<keyword id="KW-1185">Reference proteome</keyword>
<keyword id="KW-0808">Transferase</keyword>
<feature type="chain" id="PRO_0000323845" description="Uridylate kinase">
    <location>
        <begin position="1"/>
        <end position="238"/>
    </location>
</feature>
<feature type="binding site" evidence="1">
    <location>
        <begin position="12"/>
        <end position="15"/>
    </location>
    <ligand>
        <name>ATP</name>
        <dbReference type="ChEBI" id="CHEBI:30616"/>
    </ligand>
</feature>
<feature type="binding site" evidence="1">
    <location>
        <position position="54"/>
    </location>
    <ligand>
        <name>UMP</name>
        <dbReference type="ChEBI" id="CHEBI:57865"/>
    </ligand>
</feature>
<feature type="binding site" evidence="1">
    <location>
        <position position="55"/>
    </location>
    <ligand>
        <name>ATP</name>
        <dbReference type="ChEBI" id="CHEBI:30616"/>
    </ligand>
</feature>
<feature type="binding site" evidence="1">
    <location>
        <position position="59"/>
    </location>
    <ligand>
        <name>ATP</name>
        <dbReference type="ChEBI" id="CHEBI:30616"/>
    </ligand>
</feature>
<feature type="binding site" evidence="1">
    <location>
        <position position="74"/>
    </location>
    <ligand>
        <name>UMP</name>
        <dbReference type="ChEBI" id="CHEBI:57865"/>
    </ligand>
</feature>
<feature type="binding site" evidence="1">
    <location>
        <begin position="135"/>
        <end position="142"/>
    </location>
    <ligand>
        <name>UMP</name>
        <dbReference type="ChEBI" id="CHEBI:57865"/>
    </ligand>
</feature>
<feature type="binding site" evidence="1">
    <location>
        <position position="162"/>
    </location>
    <ligand>
        <name>ATP</name>
        <dbReference type="ChEBI" id="CHEBI:30616"/>
    </ligand>
</feature>
<feature type="binding site" evidence="1">
    <location>
        <position position="168"/>
    </location>
    <ligand>
        <name>ATP</name>
        <dbReference type="ChEBI" id="CHEBI:30616"/>
    </ligand>
</feature>
<feature type="binding site" evidence="1">
    <location>
        <position position="171"/>
    </location>
    <ligand>
        <name>ATP</name>
        <dbReference type="ChEBI" id="CHEBI:30616"/>
    </ligand>
</feature>
<comment type="function">
    <text evidence="1">Catalyzes the reversible phosphorylation of UMP to UDP.</text>
</comment>
<comment type="catalytic activity">
    <reaction evidence="1">
        <text>UMP + ATP = UDP + ADP</text>
        <dbReference type="Rhea" id="RHEA:24400"/>
        <dbReference type="ChEBI" id="CHEBI:30616"/>
        <dbReference type="ChEBI" id="CHEBI:57865"/>
        <dbReference type="ChEBI" id="CHEBI:58223"/>
        <dbReference type="ChEBI" id="CHEBI:456216"/>
        <dbReference type="EC" id="2.7.4.22"/>
    </reaction>
</comment>
<comment type="activity regulation">
    <text evidence="1">Inhibited by UTP.</text>
</comment>
<comment type="pathway">
    <text evidence="1">Pyrimidine metabolism; CTP biosynthesis via de novo pathway; UDP from UMP (UMPK route): step 1/1.</text>
</comment>
<comment type="subunit">
    <text evidence="1">Homohexamer.</text>
</comment>
<comment type="subcellular location">
    <subcellularLocation>
        <location evidence="1">Cytoplasm</location>
    </subcellularLocation>
</comment>
<comment type="similarity">
    <text evidence="1">Belongs to the UMP kinase family.</text>
</comment>
<gene>
    <name evidence="1" type="primary">pyrH</name>
    <name type="ordered locus">ELI_03785</name>
</gene>
<protein>
    <recommendedName>
        <fullName evidence="1">Uridylate kinase</fullName>
        <shortName evidence="1">UK</shortName>
        <ecNumber evidence="1">2.7.4.22</ecNumber>
    </recommendedName>
    <alternativeName>
        <fullName evidence="1">Uridine monophosphate kinase</fullName>
        <shortName evidence="1">UMP kinase</shortName>
        <shortName evidence="1">UMPK</shortName>
    </alternativeName>
</protein>